<evidence type="ECO:0000255" key="1">
    <source>
        <dbReference type="HAMAP-Rule" id="MF_02091"/>
    </source>
</evidence>
<evidence type="ECO:0000305" key="2"/>
<reference key="1">
    <citation type="journal article" date="2001" name="Nature">
        <title>Complete genome sequence of Salmonella enterica serovar Typhimurium LT2.</title>
        <authorList>
            <person name="McClelland M."/>
            <person name="Sanderson K.E."/>
            <person name="Spieth J."/>
            <person name="Clifton S.W."/>
            <person name="Latreille P."/>
            <person name="Courtney L."/>
            <person name="Porwollik S."/>
            <person name="Ali J."/>
            <person name="Dante M."/>
            <person name="Du F."/>
            <person name="Hou S."/>
            <person name="Layman D."/>
            <person name="Leonard S."/>
            <person name="Nguyen C."/>
            <person name="Scott K."/>
            <person name="Holmes A."/>
            <person name="Grewal N."/>
            <person name="Mulvaney E."/>
            <person name="Ryan E."/>
            <person name="Sun H."/>
            <person name="Florea L."/>
            <person name="Miller W."/>
            <person name="Stoneking T."/>
            <person name="Nhan M."/>
            <person name="Waterston R."/>
            <person name="Wilson R.K."/>
        </authorList>
    </citation>
    <scope>NUCLEOTIDE SEQUENCE [LARGE SCALE GENOMIC DNA]</scope>
    <source>
        <strain>LT2 / SGSC1412 / ATCC 700720</strain>
    </source>
</reference>
<keyword id="KW-0997">Cell inner membrane</keyword>
<keyword id="KW-1003">Cell membrane</keyword>
<keyword id="KW-0472">Membrane</keyword>
<keyword id="KW-1185">Reference proteome</keyword>
<keyword id="KW-0812">Transmembrane</keyword>
<keyword id="KW-1133">Transmembrane helix</keyword>
<keyword id="KW-0813">Transport</keyword>
<sequence>MPALTQHSTSITLFRISAAMFLNYLTIGIPLVMLPLYVQQQLHLSDLLIGIAVGSQFIATLLTRGAAGRKADTSGGRRTVITGQFYCAASGLLMLVSLIAHPVPLLAWAILIVGRVLLGIGESFILTGNLTWGMWLAGSTHAGQVISWNGMATYGALAIGAPLGLSLYARAGLALPALLVVLLPIIASGVIYGIPGNIPTARPRVPVLRVVGLVWRPGTGLVLQGIGFATLSAFTALWFNERHWDNTGFAMTLFGIAFIAVRFFCAKFPDRYGGATVATFSLLVEGTGLAVMWAAPSAGAALIGAAITGCGCSLMFPSLGVEVVRRVPPEIRGTALGVWSAFQDLAYGFTGPIAGLLTPFIGYQQVFLLAAACALLGAAVVHLLLRQH</sequence>
<dbReference type="EMBL" id="AE006468">
    <property type="protein sequence ID" value="AAL23248.1"/>
    <property type="molecule type" value="Genomic_DNA"/>
</dbReference>
<dbReference type="RefSeq" id="NP_463289.1">
    <property type="nucleotide sequence ID" value="NC_003197.2"/>
</dbReference>
<dbReference type="RefSeq" id="WP_001111174.1">
    <property type="nucleotide sequence ID" value="NC_003197.2"/>
</dbReference>
<dbReference type="SMR" id="Q8ZK55"/>
<dbReference type="STRING" id="99287.STM4428"/>
<dbReference type="PaxDb" id="99287-STM4428"/>
<dbReference type="GeneID" id="1255954"/>
<dbReference type="KEGG" id="stm:STM4428"/>
<dbReference type="PATRIC" id="fig|99287.12.peg.4656"/>
<dbReference type="HOGENOM" id="CLU_001265_10_3_6"/>
<dbReference type="OMA" id="IYMIQEL"/>
<dbReference type="PhylomeDB" id="Q8ZK55"/>
<dbReference type="BioCyc" id="SENT99287:STM4428-MONOMER"/>
<dbReference type="Proteomes" id="UP000001014">
    <property type="component" value="Chromosome"/>
</dbReference>
<dbReference type="GO" id="GO:0005886">
    <property type="term" value="C:plasma membrane"/>
    <property type="evidence" value="ECO:0000318"/>
    <property type="project" value="GO_Central"/>
</dbReference>
<dbReference type="GO" id="GO:0022857">
    <property type="term" value="F:transmembrane transporter activity"/>
    <property type="evidence" value="ECO:0007669"/>
    <property type="project" value="UniProtKB-UniRule"/>
</dbReference>
<dbReference type="CDD" id="cd17489">
    <property type="entry name" value="MFS_YfcJ_like"/>
    <property type="match status" value="1"/>
</dbReference>
<dbReference type="Gene3D" id="1.20.1250.20">
    <property type="entry name" value="MFS general substrate transporter like domains"/>
    <property type="match status" value="1"/>
</dbReference>
<dbReference type="HAMAP" id="MF_02091">
    <property type="entry name" value="MFS_YfcJ"/>
    <property type="match status" value="1"/>
</dbReference>
<dbReference type="InterPro" id="IPR011701">
    <property type="entry name" value="MFS"/>
</dbReference>
<dbReference type="InterPro" id="IPR020846">
    <property type="entry name" value="MFS_dom"/>
</dbReference>
<dbReference type="InterPro" id="IPR036259">
    <property type="entry name" value="MFS_trans_sf"/>
</dbReference>
<dbReference type="InterPro" id="IPR050171">
    <property type="entry name" value="MFS_Transporters"/>
</dbReference>
<dbReference type="InterPro" id="IPR037541">
    <property type="entry name" value="MFS_YfcJ"/>
</dbReference>
<dbReference type="NCBIfam" id="NF003477">
    <property type="entry name" value="PRK05122.1"/>
    <property type="match status" value="1"/>
</dbReference>
<dbReference type="NCBIfam" id="NF009048">
    <property type="entry name" value="PRK12382.1"/>
    <property type="match status" value="1"/>
</dbReference>
<dbReference type="PANTHER" id="PTHR23517:SF1">
    <property type="match status" value="1"/>
</dbReference>
<dbReference type="PANTHER" id="PTHR23517">
    <property type="entry name" value="RESISTANCE PROTEIN MDTM, PUTATIVE-RELATED-RELATED"/>
    <property type="match status" value="1"/>
</dbReference>
<dbReference type="Pfam" id="PF07690">
    <property type="entry name" value="MFS_1"/>
    <property type="match status" value="1"/>
</dbReference>
<dbReference type="SUPFAM" id="SSF103473">
    <property type="entry name" value="MFS general substrate transporter"/>
    <property type="match status" value="1"/>
</dbReference>
<dbReference type="PROSITE" id="PS50850">
    <property type="entry name" value="MFS"/>
    <property type="match status" value="1"/>
</dbReference>
<comment type="subcellular location">
    <subcellularLocation>
        <location evidence="1">Cell inner membrane</location>
        <topology evidence="1">Multi-pass membrane protein</topology>
    </subcellularLocation>
</comment>
<comment type="similarity">
    <text evidence="1">Belongs to the major facilitator superfamily. YfcJ family.</text>
</comment>
<gene>
    <name type="ordered locus">STM4428</name>
</gene>
<protein>
    <recommendedName>
        <fullName evidence="2">Uncharacterized MFS-type transporter STM4428</fullName>
    </recommendedName>
</protein>
<feature type="chain" id="PRO_0000087814" description="Uncharacterized MFS-type transporter STM4428">
    <location>
        <begin position="1"/>
        <end position="388"/>
    </location>
</feature>
<feature type="transmembrane region" description="Helical" evidence="1">
    <location>
        <begin position="18"/>
        <end position="38"/>
    </location>
</feature>
<feature type="transmembrane region" description="Helical" evidence="1">
    <location>
        <begin position="42"/>
        <end position="62"/>
    </location>
</feature>
<feature type="transmembrane region" description="Helical" evidence="1">
    <location>
        <begin position="89"/>
        <end position="111"/>
    </location>
</feature>
<feature type="transmembrane region" description="Helical" evidence="1">
    <location>
        <begin position="116"/>
        <end position="136"/>
    </location>
</feature>
<feature type="transmembrane region" description="Helical" evidence="1">
    <location>
        <begin position="145"/>
        <end position="165"/>
    </location>
</feature>
<feature type="transmembrane region" description="Helical" evidence="1">
    <location>
        <begin position="171"/>
        <end position="191"/>
    </location>
</feature>
<feature type="transmembrane region" description="Helical" evidence="1">
    <location>
        <begin position="219"/>
        <end position="239"/>
    </location>
</feature>
<feature type="transmembrane region" description="Helical" evidence="1">
    <location>
        <begin position="248"/>
        <end position="268"/>
    </location>
</feature>
<feature type="transmembrane region" description="Helical" evidence="1">
    <location>
        <begin position="287"/>
        <end position="307"/>
    </location>
</feature>
<feature type="transmembrane region" description="Helical" evidence="1">
    <location>
        <begin position="341"/>
        <end position="361"/>
    </location>
</feature>
<feature type="transmembrane region" description="Helical" evidence="1">
    <location>
        <begin position="365"/>
        <end position="385"/>
    </location>
</feature>
<name>Y4428_SALTY</name>
<accession>Q8ZK55</accession>
<proteinExistence type="inferred from homology"/>
<organism>
    <name type="scientific">Salmonella typhimurium (strain LT2 / SGSC1412 / ATCC 700720)</name>
    <dbReference type="NCBI Taxonomy" id="99287"/>
    <lineage>
        <taxon>Bacteria</taxon>
        <taxon>Pseudomonadati</taxon>
        <taxon>Pseudomonadota</taxon>
        <taxon>Gammaproteobacteria</taxon>
        <taxon>Enterobacterales</taxon>
        <taxon>Enterobacteriaceae</taxon>
        <taxon>Salmonella</taxon>
    </lineage>
</organism>